<keyword id="KW-0963">Cytoplasm</keyword>
<keyword id="KW-0227">DNA damage</keyword>
<keyword id="KW-0234">DNA repair</keyword>
<keyword id="KW-0378">Hydrolase</keyword>
<keyword id="KW-1185">Reference proteome</keyword>
<gene>
    <name evidence="1" type="primary">ung</name>
    <name type="ordered locus">CV_0232</name>
</gene>
<organism>
    <name type="scientific">Chromobacterium violaceum (strain ATCC 12472 / DSM 30191 / JCM 1249 / CCUG 213 / NBRC 12614 / NCIMB 9131 / NCTC 9757 / MK)</name>
    <dbReference type="NCBI Taxonomy" id="243365"/>
    <lineage>
        <taxon>Bacteria</taxon>
        <taxon>Pseudomonadati</taxon>
        <taxon>Pseudomonadota</taxon>
        <taxon>Betaproteobacteria</taxon>
        <taxon>Neisseriales</taxon>
        <taxon>Chromobacteriaceae</taxon>
        <taxon>Chromobacterium</taxon>
    </lineage>
</organism>
<comment type="function">
    <text evidence="1">Excises uracil residues from the DNA which can arise as a result of misincorporation of dUMP residues by DNA polymerase or due to deamination of cytosine.</text>
</comment>
<comment type="catalytic activity">
    <reaction evidence="1">
        <text>Hydrolyzes single-stranded DNA or mismatched double-stranded DNA and polynucleotides, releasing free uracil.</text>
        <dbReference type="EC" id="3.2.2.27"/>
    </reaction>
</comment>
<comment type="subcellular location">
    <subcellularLocation>
        <location evidence="1">Cytoplasm</location>
    </subcellularLocation>
</comment>
<comment type="similarity">
    <text evidence="1">Belongs to the uracil-DNA glycosylase (UDG) superfamily. UNG family.</text>
</comment>
<dbReference type="EC" id="3.2.2.27" evidence="1"/>
<dbReference type="EMBL" id="AE016825">
    <property type="protein sequence ID" value="AAQ57911.1"/>
    <property type="molecule type" value="Genomic_DNA"/>
</dbReference>
<dbReference type="SMR" id="Q7P1I1"/>
<dbReference type="STRING" id="243365.CV_0232"/>
<dbReference type="KEGG" id="cvi:CV_0232"/>
<dbReference type="eggNOG" id="COG0692">
    <property type="taxonomic scope" value="Bacteria"/>
</dbReference>
<dbReference type="HOGENOM" id="CLU_032162_3_0_4"/>
<dbReference type="Proteomes" id="UP000001424">
    <property type="component" value="Chromosome"/>
</dbReference>
<dbReference type="GO" id="GO:0005737">
    <property type="term" value="C:cytoplasm"/>
    <property type="evidence" value="ECO:0007669"/>
    <property type="project" value="UniProtKB-SubCell"/>
</dbReference>
<dbReference type="GO" id="GO:0004844">
    <property type="term" value="F:uracil DNA N-glycosylase activity"/>
    <property type="evidence" value="ECO:0007669"/>
    <property type="project" value="UniProtKB-UniRule"/>
</dbReference>
<dbReference type="GO" id="GO:0097510">
    <property type="term" value="P:base-excision repair, AP site formation via deaminated base removal"/>
    <property type="evidence" value="ECO:0007669"/>
    <property type="project" value="TreeGrafter"/>
</dbReference>
<dbReference type="CDD" id="cd10027">
    <property type="entry name" value="UDG-F1-like"/>
    <property type="match status" value="1"/>
</dbReference>
<dbReference type="Gene3D" id="3.40.470.10">
    <property type="entry name" value="Uracil-DNA glycosylase-like domain"/>
    <property type="match status" value="1"/>
</dbReference>
<dbReference type="HAMAP" id="MF_00148">
    <property type="entry name" value="UDG"/>
    <property type="match status" value="1"/>
</dbReference>
<dbReference type="InterPro" id="IPR002043">
    <property type="entry name" value="UDG_fam1"/>
</dbReference>
<dbReference type="InterPro" id="IPR018085">
    <property type="entry name" value="Ura-DNA_Glyclase_AS"/>
</dbReference>
<dbReference type="InterPro" id="IPR005122">
    <property type="entry name" value="Uracil-DNA_glycosylase-like"/>
</dbReference>
<dbReference type="InterPro" id="IPR036895">
    <property type="entry name" value="Uracil-DNA_glycosylase-like_sf"/>
</dbReference>
<dbReference type="NCBIfam" id="NF003588">
    <property type="entry name" value="PRK05254.1-1"/>
    <property type="match status" value="1"/>
</dbReference>
<dbReference type="NCBIfam" id="NF003589">
    <property type="entry name" value="PRK05254.1-2"/>
    <property type="match status" value="1"/>
</dbReference>
<dbReference type="NCBIfam" id="NF003591">
    <property type="entry name" value="PRK05254.1-4"/>
    <property type="match status" value="1"/>
</dbReference>
<dbReference type="NCBIfam" id="NF003592">
    <property type="entry name" value="PRK05254.1-5"/>
    <property type="match status" value="1"/>
</dbReference>
<dbReference type="NCBIfam" id="TIGR00628">
    <property type="entry name" value="ung"/>
    <property type="match status" value="1"/>
</dbReference>
<dbReference type="PANTHER" id="PTHR11264">
    <property type="entry name" value="URACIL-DNA GLYCOSYLASE"/>
    <property type="match status" value="1"/>
</dbReference>
<dbReference type="PANTHER" id="PTHR11264:SF0">
    <property type="entry name" value="URACIL-DNA GLYCOSYLASE"/>
    <property type="match status" value="1"/>
</dbReference>
<dbReference type="Pfam" id="PF03167">
    <property type="entry name" value="UDG"/>
    <property type="match status" value="1"/>
</dbReference>
<dbReference type="SMART" id="SM00986">
    <property type="entry name" value="UDG"/>
    <property type="match status" value="1"/>
</dbReference>
<dbReference type="SMART" id="SM00987">
    <property type="entry name" value="UreE_C"/>
    <property type="match status" value="1"/>
</dbReference>
<dbReference type="SUPFAM" id="SSF52141">
    <property type="entry name" value="Uracil-DNA glycosylase-like"/>
    <property type="match status" value="1"/>
</dbReference>
<dbReference type="PROSITE" id="PS00130">
    <property type="entry name" value="U_DNA_GLYCOSYLASE"/>
    <property type="match status" value="1"/>
</dbReference>
<name>UNG_CHRVO</name>
<feature type="chain" id="PRO_0000176085" description="Uracil-DNA glycosylase">
    <location>
        <begin position="1"/>
        <end position="238"/>
    </location>
</feature>
<feature type="active site" description="Proton acceptor" evidence="1">
    <location>
        <position position="72"/>
    </location>
</feature>
<accession>Q7P1I1</accession>
<proteinExistence type="inferred from homology"/>
<reference key="1">
    <citation type="journal article" date="2003" name="Proc. Natl. Acad. Sci. U.S.A.">
        <title>The complete genome sequence of Chromobacterium violaceum reveals remarkable and exploitable bacterial adaptability.</title>
        <authorList>
            <person name="Vasconcelos A.T.R."/>
            <person name="de Almeida D.F."/>
            <person name="Hungria M."/>
            <person name="Guimaraes C.T."/>
            <person name="Antonio R.V."/>
            <person name="Almeida F.C."/>
            <person name="de Almeida L.G.P."/>
            <person name="de Almeida R."/>
            <person name="Alves-Gomes J.A."/>
            <person name="Andrade E.M."/>
            <person name="Araripe J."/>
            <person name="de Araujo M.F.F."/>
            <person name="Astolfi-Filho S."/>
            <person name="Azevedo V."/>
            <person name="Baptista A.J."/>
            <person name="Bataus L.A.M."/>
            <person name="Batista J.S."/>
            <person name="Belo A."/>
            <person name="van den Berg C."/>
            <person name="Bogo M."/>
            <person name="Bonatto S."/>
            <person name="Bordignon J."/>
            <person name="Brigido M.M."/>
            <person name="Brito C.A."/>
            <person name="Brocchi M."/>
            <person name="Burity H.A."/>
            <person name="Camargo A.A."/>
            <person name="Cardoso D.D.P."/>
            <person name="Carneiro N.P."/>
            <person name="Carraro D.M."/>
            <person name="Carvalho C.M.B."/>
            <person name="Cascardo J.C.M."/>
            <person name="Cavada B.S."/>
            <person name="Chueire L.M.O."/>
            <person name="Creczynski-Pasa T.B."/>
            <person name="Cunha-Junior N.C."/>
            <person name="Fagundes N."/>
            <person name="Falcao C.L."/>
            <person name="Fantinatti F."/>
            <person name="Farias I.P."/>
            <person name="Felipe M.S.S."/>
            <person name="Ferrari L.P."/>
            <person name="Ferro J.A."/>
            <person name="Ferro M.I.T."/>
            <person name="Franco G.R."/>
            <person name="Freitas N.S.A."/>
            <person name="Furlan L.R."/>
            <person name="Gazzinelli R.T."/>
            <person name="Gomes E.A."/>
            <person name="Goncalves P.R."/>
            <person name="Grangeiro T.B."/>
            <person name="Grattapaglia D."/>
            <person name="Grisard E.C."/>
            <person name="Hanna E.S."/>
            <person name="Jardim S.N."/>
            <person name="Laurino J."/>
            <person name="Leoi L.C.T."/>
            <person name="Lima L.F.A."/>
            <person name="Loureiro M.F."/>
            <person name="Lyra M.C.C.P."/>
            <person name="Madeira H.M.F."/>
            <person name="Manfio G.P."/>
            <person name="Maranhao A.Q."/>
            <person name="Martins W.S."/>
            <person name="di Mauro S.M.Z."/>
            <person name="de Medeiros S.R.B."/>
            <person name="Meissner R.V."/>
            <person name="Moreira M.A.M."/>
            <person name="Nascimento F.F."/>
            <person name="Nicolas M.F."/>
            <person name="Oliveira J.G."/>
            <person name="Oliveira S.C."/>
            <person name="Paixao R.F.C."/>
            <person name="Parente J.A."/>
            <person name="Pedrosa F.O."/>
            <person name="Pena S.D.J."/>
            <person name="Pereira J.O."/>
            <person name="Pereira M."/>
            <person name="Pinto L.S.R.C."/>
            <person name="Pinto L.S."/>
            <person name="Porto J.I.R."/>
            <person name="Potrich D.P."/>
            <person name="Ramalho-Neto C.E."/>
            <person name="Reis A.M.M."/>
            <person name="Rigo L.U."/>
            <person name="Rondinelli E."/>
            <person name="Santos E.B.P."/>
            <person name="Santos F.R."/>
            <person name="Schneider M.P.C."/>
            <person name="Seuanez H.N."/>
            <person name="Silva A.M.R."/>
            <person name="da Silva A.L.C."/>
            <person name="Silva D.W."/>
            <person name="Silva R."/>
            <person name="Simoes I.C."/>
            <person name="Simon D."/>
            <person name="Soares C.M.A."/>
            <person name="Soares R.B.A."/>
            <person name="Souza E.M."/>
            <person name="Souza K.R.L."/>
            <person name="Souza R.C."/>
            <person name="Steffens M.B.R."/>
            <person name="Steindel M."/>
            <person name="Teixeira S.R."/>
            <person name="Urmenyi T."/>
            <person name="Vettore A."/>
            <person name="Wassem R."/>
            <person name="Zaha A."/>
            <person name="Simpson A.J.G."/>
        </authorList>
    </citation>
    <scope>NUCLEOTIDE SEQUENCE [LARGE SCALE GENOMIC DNA]</scope>
    <source>
        <strain>ATCC 12472 / DSM 30191 / JCM 1249 / CCUG 213 / NBRC 12614 / NCIMB 9131 / NCTC 9757 / MK</strain>
    </source>
</reference>
<protein>
    <recommendedName>
        <fullName evidence="1">Uracil-DNA glycosylase</fullName>
        <shortName evidence="1">UDG</shortName>
        <ecNumber evidence="1">3.2.2.27</ecNumber>
    </recommendedName>
</protein>
<evidence type="ECO:0000255" key="1">
    <source>
        <dbReference type="HAMAP-Rule" id="MF_00148"/>
    </source>
</evidence>
<sequence>MTYLAPALARIHPDWEAVLDQAAVAARLAEIDRLLVLQQQDGKTLFPPPPQVFNALAFAAPADVKVVILGQDPYHGDGEAMGLSFSVPDGARVPPSLRNIYKELAADLGLGVPASGDLTHWAQQGVLLLNSVLTVERDKAGSHGKLGWQTVSDALIDAVNRDNPGCVFLLWGNWAQTKAERIDASRHLVLTAAHPSPLSASRGFHGCRHFSQVNAWLIARGRQPVRWATAPAAQSCLF</sequence>